<feature type="chain" id="PRO_0000365782" description="Nucleoprotein">
    <location>
        <begin position="1"/>
        <end position="391"/>
    </location>
</feature>
<feature type="region of interest" description="Interaction with the phosphoprotein" evidence="1">
    <location>
        <begin position="31"/>
        <end position="252"/>
    </location>
</feature>
<feature type="region of interest" description="Interaction with the phosphoprotein" evidence="2">
    <location>
        <begin position="244"/>
        <end position="290"/>
    </location>
</feature>
<feature type="region of interest" description="Interaction with the phosphoprotein" evidence="2">
    <location>
        <begin position="338"/>
        <end position="364"/>
    </location>
</feature>
<feature type="modified residue" description="Phosphotyrosine" evidence="1">
    <location>
        <position position="38"/>
    </location>
</feature>
<reference key="1">
    <citation type="journal article" date="1997" name="Proc. Natl. Acad. Sci. U.S.A.">
        <title>Respiratory syncytial virus (RSV) SH and G proteins are not essential for viral replication in vitro: clinical evaluation and molecular characterization of a cold-passaged, attenuated RSV subgroup B mutant.</title>
        <authorList>
            <person name="Karron R.A."/>
            <person name="Buonagurio D.A."/>
            <person name="Georgiu A.F."/>
            <person name="Whitehead S.S."/>
            <person name="Adamus J.E."/>
            <person name="Clements-Mann M.L."/>
            <person name="Harris D.O."/>
            <person name="Randolph V.B."/>
            <person name="Udem S.A."/>
            <person name="Murphy B.R."/>
            <person name="Sidhu M.S."/>
        </authorList>
    </citation>
    <scope>NUCLEOTIDE SEQUENCE [GENOMIC RNA]</scope>
</reference>
<dbReference type="EMBL" id="AF013254">
    <property type="protein sequence ID" value="AAB82431.1"/>
    <property type="molecule type" value="Genomic_RNA"/>
</dbReference>
<dbReference type="EMBL" id="AF013255">
    <property type="protein sequence ID" value="AAB82442.1"/>
    <property type="molecule type" value="Genomic_RNA"/>
</dbReference>
<dbReference type="RefSeq" id="NP_056858.1">
    <property type="nucleotide sequence ID" value="NC_001781.1"/>
</dbReference>
<dbReference type="SMR" id="O42053"/>
<dbReference type="GeneID" id="1489820"/>
<dbReference type="KEGG" id="vg:1489820"/>
<dbReference type="Proteomes" id="UP000002472">
    <property type="component" value="Segment"/>
</dbReference>
<dbReference type="Proteomes" id="UP000180717">
    <property type="component" value="Genome"/>
</dbReference>
<dbReference type="GO" id="GO:0019029">
    <property type="term" value="C:helical viral capsid"/>
    <property type="evidence" value="ECO:0007669"/>
    <property type="project" value="UniProtKB-KW"/>
</dbReference>
<dbReference type="GO" id="GO:0030430">
    <property type="term" value="C:host cell cytoplasm"/>
    <property type="evidence" value="ECO:0007669"/>
    <property type="project" value="UniProtKB-SubCell"/>
</dbReference>
<dbReference type="GO" id="GO:1990904">
    <property type="term" value="C:ribonucleoprotein complex"/>
    <property type="evidence" value="ECO:0007669"/>
    <property type="project" value="UniProtKB-KW"/>
</dbReference>
<dbReference type="GO" id="GO:0019013">
    <property type="term" value="C:viral nucleocapsid"/>
    <property type="evidence" value="ECO:0007669"/>
    <property type="project" value="UniProtKB-KW"/>
</dbReference>
<dbReference type="GO" id="GO:0030291">
    <property type="term" value="F:protein serine/threonine kinase inhibitor activity"/>
    <property type="evidence" value="ECO:0007669"/>
    <property type="project" value="UniProtKB-KW"/>
</dbReference>
<dbReference type="GO" id="GO:0003723">
    <property type="term" value="F:RNA binding"/>
    <property type="evidence" value="ECO:0007669"/>
    <property type="project" value="UniProtKB-KW"/>
</dbReference>
<dbReference type="GO" id="GO:0039545">
    <property type="term" value="P:symbiont-mediated suppression of host cytoplasmic pattern recognition receptor signaling pathway via inhibition of MAVS activity"/>
    <property type="evidence" value="ECO:0007669"/>
    <property type="project" value="UniProtKB-KW"/>
</dbReference>
<dbReference type="GO" id="GO:0039554">
    <property type="term" value="P:symbiont-mediated suppression of host cytoplasmic pattern recognition receptor signaling pathway via inhibition of MDA-5 activity"/>
    <property type="evidence" value="ECO:0007669"/>
    <property type="project" value="UniProtKB-KW"/>
</dbReference>
<dbReference type="GO" id="GO:0085034">
    <property type="term" value="P:symbiont-mediated suppression of host NF-kappaB cascade"/>
    <property type="evidence" value="ECO:0007669"/>
    <property type="project" value="UniProtKB-KW"/>
</dbReference>
<dbReference type="GO" id="GO:0039580">
    <property type="term" value="P:symbiont-mediated suppression of host PKR/eIFalpha signaling"/>
    <property type="evidence" value="ECO:0007669"/>
    <property type="project" value="UniProtKB-KW"/>
</dbReference>
<dbReference type="GO" id="GO:0039502">
    <property type="term" value="P:symbiont-mediated suppression of host type I interferon-mediated signaling pathway"/>
    <property type="evidence" value="ECO:0007669"/>
    <property type="project" value="UniProtKB-KW"/>
</dbReference>
<dbReference type="InterPro" id="IPR004930">
    <property type="entry name" value="Pneumo_ncap"/>
</dbReference>
<dbReference type="Pfam" id="PF03246">
    <property type="entry name" value="Pneumo_ncap"/>
    <property type="match status" value="1"/>
</dbReference>
<gene>
    <name type="primary">N</name>
</gene>
<organism>
    <name type="scientific">Human respiratory syncytial virus B (strain B1)</name>
    <dbReference type="NCBI Taxonomy" id="79692"/>
    <lineage>
        <taxon>Viruses</taxon>
        <taxon>Riboviria</taxon>
        <taxon>Orthornavirae</taxon>
        <taxon>Negarnaviricota</taxon>
        <taxon>Haploviricotina</taxon>
        <taxon>Monjiviricetes</taxon>
        <taxon>Mononegavirales</taxon>
        <taxon>Pneumoviridae</taxon>
        <taxon>Orthopneumovirus</taxon>
        <taxon>Orthopneumovirus hominis</taxon>
    </lineage>
</organism>
<proteinExistence type="inferred from homology"/>
<evidence type="ECO:0000250" key="1">
    <source>
        <dbReference type="UniProtKB" id="P03418"/>
    </source>
</evidence>
<evidence type="ECO:0000250" key="2">
    <source>
        <dbReference type="UniProtKB" id="P22677"/>
    </source>
</evidence>
<evidence type="ECO:0000305" key="3"/>
<comment type="function">
    <text evidence="1">Encapsidates the viral RNA genome by forming a left-handed helical nucleocapsid that protects the RNA from nucleases. RNA replication depends on the availability of soluble nucleoprotein. The encapsidated genomic RNA is termed the NC and serves as template for transcription and replication. Together with the phosphoprotein, sequesters host NF-kappa-B in inclusion bodies (IBs) thereby inhibiting this host defense pathway. May also act as a modulator of the innate immune response by sequestration of host IFIH1/MDA5 and MAVS into IBs.</text>
</comment>
<comment type="subunit">
    <text evidence="1 2">Homomultimerizes to form the nucleocapsid. Binds to viral genomic RNA. Interacts (via N-terminus) with the phosphoprotein P (via C-terminus); the phosphorylated phosphoprotein P binds to N-RNA complex. When in a monomeric RNA-free form, interacts with the phosphoprotein (via N-terminus). Interacts with protein M2-1; this interaction allows the association of nucleocapsid with the matrix protein. Interacts with host EIF2AK2/PKR; this interaction inhibits EIF2AK2 phosphorylation of EIF2S1 and blocks EIF2AK2-mediated translation shutoff. Interacts with host EIF1AX; this interaction recruits EIF1AX to the viral replication complex to facilitate viral genomic RNA synthesis and virus production (By similarity). Interacts with host NF-kappa-B; this interaction sequesters NF-kappa-B in inclusion bodies (By similarity). Interacts with host TAX1BP1; this interaction may promote viral growth by inhibiting the innate immune response (By similarity).</text>
</comment>
<comment type="subcellular location">
    <subcellularLocation>
        <location evidence="1">Virion</location>
    </subcellularLocation>
    <subcellularLocation>
        <location evidence="1">Host cytoplasm</location>
    </subcellularLocation>
    <text evidence="1">Localizes in cytoplasmic inclusion bodies.</text>
</comment>
<comment type="PTM">
    <text evidence="1">Tyrosine phosphorylation modulates viral transcription and replication.</text>
</comment>
<comment type="similarity">
    <text evidence="3">Belongs to the paramyxoviruses nucleocapsid family.</text>
</comment>
<organismHost>
    <name type="scientific">Homo sapiens</name>
    <name type="common">Human</name>
    <dbReference type="NCBI Taxonomy" id="9606"/>
</organismHost>
<protein>
    <recommendedName>
        <fullName>Nucleoprotein</fullName>
        <shortName>Protein N</shortName>
    </recommendedName>
    <alternativeName>
        <fullName>Nucleocapsid protein</fullName>
    </alternativeName>
</protein>
<name>NCAP_HRSVB</name>
<keyword id="KW-0167">Capsid protein</keyword>
<keyword id="KW-1139">Helical capsid protein</keyword>
<keyword id="KW-1035">Host cytoplasm</keyword>
<keyword id="KW-0945">Host-virus interaction</keyword>
<keyword id="KW-1090">Inhibition of host innate immune response by virus</keyword>
<keyword id="KW-1114">Inhibition of host interferon signaling pathway by virus</keyword>
<keyword id="KW-1097">Inhibition of host MAVS by virus</keyword>
<keyword id="KW-1089">Inhibition of host MDA5 by virus</keyword>
<keyword id="KW-1100">Inhibition of host NF-kappa-B by virus</keyword>
<keyword id="KW-1102">Inhibition of host PKR by virus</keyword>
<keyword id="KW-1113">Inhibition of host RLR pathway by virus</keyword>
<keyword id="KW-0922">Interferon antiviral system evasion</keyword>
<keyword id="KW-0597">Phosphoprotein</keyword>
<keyword id="KW-1185">Reference proteome</keyword>
<keyword id="KW-0687">Ribonucleoprotein</keyword>
<keyword id="KW-0694">RNA-binding</keyword>
<keyword id="KW-0899">Viral immunoevasion</keyword>
<keyword id="KW-0543">Viral nucleoprotein</keyword>
<keyword id="KW-0946">Virion</keyword>
<sequence>MALSKVKLNDTLNKDQLLSSSKYTIQRSTGDNIDTPNYDVQKHLNKLCGMLLITEDANHKFTGLIGMLYAMSRLGREDTIKILKDAGYHVKANGVDITTYRQDINGKEMKFEVLTLSSLTSEIQVNIEIESRKSYKKMLKEMGEVAPEYRHDSPDCGMIILCIAALVITKLAAGDRSGLTAVIRRANNVLKNEIKRYKGLIPKDIANSFYEVFEKHPHLIDVFVHFGIAQSSTRGGSRVEGIFAGLFMNAYGSGQVMLRWGVLAKSVKNIMLGHASVQAEMEQVVEVYEYAQKLGGEAGFYHILNNPKASLLSLTQFPNFSSVVLGNAAGLGIMGEYRGTPRNQDLYDAAKAYAEQLKENGVINYSVLDLTAEELEAIKNQLNPKEDDVEL</sequence>
<accession>O42053</accession>